<evidence type="ECO:0000250" key="1"/>
<evidence type="ECO:0000255" key="2"/>
<evidence type="ECO:0000255" key="3">
    <source>
        <dbReference type="PROSITE-ProRule" id="PRU00318"/>
    </source>
</evidence>
<evidence type="ECO:0000256" key="4">
    <source>
        <dbReference type="SAM" id="MobiDB-lite"/>
    </source>
</evidence>
<evidence type="ECO:0000269" key="5">
    <source>
    </source>
</evidence>
<evidence type="ECO:0000305" key="6"/>
<reference key="1">
    <citation type="journal article" date="2000" name="Nature">
        <title>Sequence and analysis of chromosome 1 of the plant Arabidopsis thaliana.</title>
        <authorList>
            <person name="Theologis A."/>
            <person name="Ecker J.R."/>
            <person name="Palm C.J."/>
            <person name="Federspiel N.A."/>
            <person name="Kaul S."/>
            <person name="White O."/>
            <person name="Alonso J."/>
            <person name="Altafi H."/>
            <person name="Araujo R."/>
            <person name="Bowman C.L."/>
            <person name="Brooks S.Y."/>
            <person name="Buehler E."/>
            <person name="Chan A."/>
            <person name="Chao Q."/>
            <person name="Chen H."/>
            <person name="Cheuk R.F."/>
            <person name="Chin C.W."/>
            <person name="Chung M.K."/>
            <person name="Conn L."/>
            <person name="Conway A.B."/>
            <person name="Conway A.R."/>
            <person name="Creasy T.H."/>
            <person name="Dewar K."/>
            <person name="Dunn P."/>
            <person name="Etgu P."/>
            <person name="Feldblyum T.V."/>
            <person name="Feng J.-D."/>
            <person name="Fong B."/>
            <person name="Fujii C.Y."/>
            <person name="Gill J.E."/>
            <person name="Goldsmith A.D."/>
            <person name="Haas B."/>
            <person name="Hansen N.F."/>
            <person name="Hughes B."/>
            <person name="Huizar L."/>
            <person name="Hunter J.L."/>
            <person name="Jenkins J."/>
            <person name="Johnson-Hopson C."/>
            <person name="Khan S."/>
            <person name="Khaykin E."/>
            <person name="Kim C.J."/>
            <person name="Koo H.L."/>
            <person name="Kremenetskaia I."/>
            <person name="Kurtz D.B."/>
            <person name="Kwan A."/>
            <person name="Lam B."/>
            <person name="Langin-Hooper S."/>
            <person name="Lee A."/>
            <person name="Lee J.M."/>
            <person name="Lenz C.A."/>
            <person name="Li J.H."/>
            <person name="Li Y.-P."/>
            <person name="Lin X."/>
            <person name="Liu S.X."/>
            <person name="Liu Z.A."/>
            <person name="Luros J.S."/>
            <person name="Maiti R."/>
            <person name="Marziali A."/>
            <person name="Militscher J."/>
            <person name="Miranda M."/>
            <person name="Nguyen M."/>
            <person name="Nierman W.C."/>
            <person name="Osborne B.I."/>
            <person name="Pai G."/>
            <person name="Peterson J."/>
            <person name="Pham P.K."/>
            <person name="Rizzo M."/>
            <person name="Rooney T."/>
            <person name="Rowley D."/>
            <person name="Sakano H."/>
            <person name="Salzberg S.L."/>
            <person name="Schwartz J.R."/>
            <person name="Shinn P."/>
            <person name="Southwick A.M."/>
            <person name="Sun H."/>
            <person name="Tallon L.J."/>
            <person name="Tambunga G."/>
            <person name="Toriumi M.J."/>
            <person name="Town C.D."/>
            <person name="Utterback T."/>
            <person name="Van Aken S."/>
            <person name="Vaysberg M."/>
            <person name="Vysotskaia V.S."/>
            <person name="Walker M."/>
            <person name="Wu D."/>
            <person name="Yu G."/>
            <person name="Fraser C.M."/>
            <person name="Venter J.C."/>
            <person name="Davis R.W."/>
        </authorList>
    </citation>
    <scope>NUCLEOTIDE SEQUENCE [LARGE SCALE GENOMIC DNA]</scope>
    <source>
        <strain>cv. Columbia</strain>
    </source>
</reference>
<reference key="2">
    <citation type="journal article" date="2017" name="Plant J.">
        <title>Araport11: a complete reannotation of the Arabidopsis thaliana reference genome.</title>
        <authorList>
            <person name="Cheng C.Y."/>
            <person name="Krishnakumar V."/>
            <person name="Chan A.P."/>
            <person name="Thibaud-Nissen F."/>
            <person name="Schobel S."/>
            <person name="Town C.D."/>
        </authorList>
    </citation>
    <scope>GENOME REANNOTATION</scope>
    <source>
        <strain>cv. Columbia</strain>
    </source>
</reference>
<reference key="3">
    <citation type="journal article" date="2009" name="FEBS J.">
        <title>Molecular characterization of Arabidopsis thaliana PUF proteins -- binding specificity and target candidates.</title>
        <authorList>
            <person name="Francischini C.W."/>
            <person name="Quaggio R.B."/>
        </authorList>
    </citation>
    <scope>GENE FAMILY</scope>
</reference>
<reference key="4">
    <citation type="journal article" date="2010" name="BMC Plant Biol.">
        <title>The Puf family of RNA-binding proteins in plants: phylogeny, structural modeling, activity and subcellular localization.</title>
        <authorList>
            <person name="Tam P.P."/>
            <person name="Barrette-Ng I.H."/>
            <person name="Simon D.M."/>
            <person name="Tam M.W."/>
            <person name="Ang A.L."/>
            <person name="Muench D.G."/>
        </authorList>
    </citation>
    <scope>GENE FAMILY</scope>
    <scope>SUBCELLULAR LOCATION</scope>
</reference>
<protein>
    <recommendedName>
        <fullName>Putative pumilio homolog 7, chloroplastic</fullName>
        <shortName>APUM-7</shortName>
        <shortName>AtPUM7</shortName>
    </recommendedName>
</protein>
<comment type="function">
    <text evidence="1">Sequence-specific RNA-binding protein that regulates translation and mRNA stability by binding the 3'-UTR of target mRNAs.</text>
</comment>
<comment type="subcellular location">
    <subcellularLocation>
        <location evidence="6">Plastid</location>
        <location evidence="6">Chloroplast</location>
    </subcellularLocation>
    <subcellularLocation>
        <location evidence="5">Cytoplasm</location>
    </subcellularLocation>
</comment>
<comment type="domain">
    <text evidence="1">The pumilio repeats mediate the association with RNA by packing together to form a right-handed superhelix that approximates a half donut. The number as well as the specific sequence of the repeats determine the specificity for target mRNAs (By similarity).</text>
</comment>
<comment type="sequence caution" evidence="6">
    <conflict type="erroneous gene model prediction">
        <sequence resource="EMBL-CDS" id="AAG52093"/>
    </conflict>
</comment>
<feature type="transit peptide" description="Chloroplast" evidence="2">
    <location>
        <begin position="1"/>
        <end position="77"/>
    </location>
</feature>
<feature type="chain" id="PRO_0000401389" description="Putative pumilio homolog 7, chloroplastic">
    <location>
        <begin position="78"/>
        <end position="650"/>
    </location>
</feature>
<feature type="domain" description="PUM-HD" evidence="3">
    <location>
        <begin position="308"/>
        <end position="650"/>
    </location>
</feature>
<feature type="repeat" description="Pumilio 1">
    <location>
        <begin position="333"/>
        <end position="368"/>
    </location>
</feature>
<feature type="repeat" description="Pumilio 2">
    <location>
        <begin position="369"/>
        <end position="404"/>
    </location>
</feature>
<feature type="repeat" description="Pumilio 3">
    <location>
        <begin position="408"/>
        <end position="443"/>
    </location>
</feature>
<feature type="repeat" description="Pumilio 4">
    <location>
        <begin position="445"/>
        <end position="480"/>
    </location>
</feature>
<feature type="repeat" description="Pumilio 5">
    <location>
        <begin position="481"/>
        <end position="516"/>
    </location>
</feature>
<feature type="repeat" description="Pumilio 6">
    <location>
        <begin position="517"/>
        <end position="552"/>
    </location>
</feature>
<feature type="repeat" description="Pumilio 7">
    <location>
        <begin position="553"/>
        <end position="591"/>
    </location>
</feature>
<feature type="repeat" description="Pumilio 8">
    <location>
        <begin position="594"/>
        <end position="625"/>
    </location>
</feature>
<feature type="region of interest" description="Disordered" evidence="4">
    <location>
        <begin position="1"/>
        <end position="22"/>
    </location>
</feature>
<feature type="region of interest" description="Disordered" evidence="4">
    <location>
        <begin position="200"/>
        <end position="235"/>
    </location>
</feature>
<feature type="compositionally biased region" description="Low complexity" evidence="4">
    <location>
        <begin position="8"/>
        <end position="22"/>
    </location>
</feature>
<feature type="compositionally biased region" description="Low complexity" evidence="4">
    <location>
        <begin position="217"/>
        <end position="232"/>
    </location>
</feature>
<organism>
    <name type="scientific">Arabidopsis thaliana</name>
    <name type="common">Mouse-ear cress</name>
    <dbReference type="NCBI Taxonomy" id="3702"/>
    <lineage>
        <taxon>Eukaryota</taxon>
        <taxon>Viridiplantae</taxon>
        <taxon>Streptophyta</taxon>
        <taxon>Embryophyta</taxon>
        <taxon>Tracheophyta</taxon>
        <taxon>Spermatophyta</taxon>
        <taxon>Magnoliopsida</taxon>
        <taxon>eudicotyledons</taxon>
        <taxon>Gunneridae</taxon>
        <taxon>Pentapetalae</taxon>
        <taxon>rosids</taxon>
        <taxon>malvids</taxon>
        <taxon>Brassicales</taxon>
        <taxon>Brassicaceae</taxon>
        <taxon>Camelineae</taxon>
        <taxon>Arabidopsis</taxon>
    </lineage>
</organism>
<dbReference type="EMBL" id="AC012680">
    <property type="protein sequence ID" value="AAG52093.1"/>
    <property type="status" value="ALT_SEQ"/>
    <property type="molecule type" value="Genomic_DNA"/>
</dbReference>
<dbReference type="EMBL" id="CP002684">
    <property type="protein sequence ID" value="AEE36075.1"/>
    <property type="molecule type" value="Genomic_DNA"/>
</dbReference>
<dbReference type="PIR" id="H96810">
    <property type="entry name" value="H96810"/>
</dbReference>
<dbReference type="RefSeq" id="NP_177940.2">
    <property type="nucleotide sequence ID" value="NM_106466.2"/>
</dbReference>
<dbReference type="SMR" id="Q9C9R6"/>
<dbReference type="STRING" id="3702.Q9C9R6"/>
<dbReference type="PaxDb" id="3702-AT1G78160.1"/>
<dbReference type="EnsemblPlants" id="AT1G78160.1">
    <property type="protein sequence ID" value="AT1G78160.1"/>
    <property type="gene ID" value="AT1G78160"/>
</dbReference>
<dbReference type="GeneID" id="844152"/>
<dbReference type="Gramene" id="AT1G78160.1">
    <property type="protein sequence ID" value="AT1G78160.1"/>
    <property type="gene ID" value="AT1G78160"/>
</dbReference>
<dbReference type="KEGG" id="ath:AT1G78160"/>
<dbReference type="Araport" id="AT1G78160"/>
<dbReference type="TAIR" id="AT1G78160">
    <property type="gene designation" value="PUM7"/>
</dbReference>
<dbReference type="eggNOG" id="KOG2049">
    <property type="taxonomic scope" value="Eukaryota"/>
</dbReference>
<dbReference type="HOGENOM" id="CLU_004017_5_1_1"/>
<dbReference type="InParanoid" id="Q9C9R6"/>
<dbReference type="PhylomeDB" id="Q9C9R6"/>
<dbReference type="PRO" id="PR:Q9C9R6"/>
<dbReference type="Proteomes" id="UP000006548">
    <property type="component" value="Chromosome 1"/>
</dbReference>
<dbReference type="ExpressionAtlas" id="Q9C9R6">
    <property type="expression patterns" value="baseline and differential"/>
</dbReference>
<dbReference type="GO" id="GO:0009507">
    <property type="term" value="C:chloroplast"/>
    <property type="evidence" value="ECO:0007669"/>
    <property type="project" value="UniProtKB-SubCell"/>
</dbReference>
<dbReference type="GO" id="GO:0005737">
    <property type="term" value="C:cytoplasm"/>
    <property type="evidence" value="ECO:0000314"/>
    <property type="project" value="TAIR"/>
</dbReference>
<dbReference type="GO" id="GO:0003729">
    <property type="term" value="F:mRNA binding"/>
    <property type="evidence" value="ECO:0000314"/>
    <property type="project" value="TAIR"/>
</dbReference>
<dbReference type="GO" id="GO:0006417">
    <property type="term" value="P:regulation of translation"/>
    <property type="evidence" value="ECO:0007669"/>
    <property type="project" value="UniProtKB-KW"/>
</dbReference>
<dbReference type="CDD" id="cd07920">
    <property type="entry name" value="Pumilio"/>
    <property type="match status" value="1"/>
</dbReference>
<dbReference type="FunFam" id="1.25.10.10:FF:000237">
    <property type="entry name" value="Pumilio homolog 9"/>
    <property type="match status" value="1"/>
</dbReference>
<dbReference type="Gene3D" id="1.25.10.10">
    <property type="entry name" value="Leucine-rich Repeat Variant"/>
    <property type="match status" value="1"/>
</dbReference>
<dbReference type="InterPro" id="IPR011989">
    <property type="entry name" value="ARM-like"/>
</dbReference>
<dbReference type="InterPro" id="IPR016024">
    <property type="entry name" value="ARM-type_fold"/>
</dbReference>
<dbReference type="InterPro" id="IPR033133">
    <property type="entry name" value="PUM-HD"/>
</dbReference>
<dbReference type="InterPro" id="IPR033712">
    <property type="entry name" value="Pumilio_RNA-bd"/>
</dbReference>
<dbReference type="InterPro" id="IPR001313">
    <property type="entry name" value="Pumilio_RNA-bd_rpt"/>
</dbReference>
<dbReference type="PANTHER" id="PTHR12537:SF138">
    <property type="entry name" value="PUMILIO HOMOLOG 7, CHLOROPLASTIC-RELATED"/>
    <property type="match status" value="1"/>
</dbReference>
<dbReference type="PANTHER" id="PTHR12537">
    <property type="entry name" value="RNA BINDING PROTEIN PUMILIO-RELATED"/>
    <property type="match status" value="1"/>
</dbReference>
<dbReference type="Pfam" id="PF00806">
    <property type="entry name" value="PUF"/>
    <property type="match status" value="8"/>
</dbReference>
<dbReference type="SMART" id="SM00025">
    <property type="entry name" value="Pumilio"/>
    <property type="match status" value="8"/>
</dbReference>
<dbReference type="SUPFAM" id="SSF48371">
    <property type="entry name" value="ARM repeat"/>
    <property type="match status" value="1"/>
</dbReference>
<dbReference type="PROSITE" id="PS50302">
    <property type="entry name" value="PUM"/>
    <property type="match status" value="8"/>
</dbReference>
<dbReference type="PROSITE" id="PS50303">
    <property type="entry name" value="PUM_HD"/>
    <property type="match status" value="1"/>
</dbReference>
<gene>
    <name type="primary">APUM7</name>
    <name type="ordered locus">At1g78160</name>
    <name type="ORF">T11I11.10</name>
</gene>
<proteinExistence type="inferred from homology"/>
<sequence length="650" mass="73501">MDEFREASSVSSSPSTPLRTPLHSPNLFNGDFSVSNRFSFKSSSDYSLSSSFSNGLCSPEDSSSPFSSPPFNGIIPKHNHTSSSPVSFDSLFFKDHEKSHVNGTDDLGLCEDLYRMNIKEDVEEDQIRYARTETLKDPLPKSDHTDFTPDPLYNFSPKHYEPSNGGFVSGGFPYGFFRPPKESSINQSCASWSGFDQSKNDDKRNMFGNNPQQFGWPSYSSSNSGTSPYNNGQEIFENRGGMREYSAYSPPHQPEVSYKHQNYRTTTSDILPLFCQRTQVPMVSKCSEPFSSDESFFMNGKSIDHQRSNTRALMSNNGNPTEICHPSLPNMCDIQGYVYLMAKDQHGCRFLQRIFDEGTSVDAMIIFNEVIAHVVELMMDPFGNYLMQKLLDVCTEEQRTQIVLVATEEPGQLIRISLNAYGTRVVQRLVETIRSGKQISLVKLALRPGFLDLIKDLNGNHVIQRCLQCLSTEDNKFIFDAATKFCTEIATHRHGCCVLQKCIAYSMRQQREKLIAEISRNSLLLAQDPFGNYAVQFVIELRIPSAVAMMLAQLKGHYVQLSMQKFSSHMVERCLMHCPESRPQIVRELVSVPHFDQLLQDPYANFVIQAALAATKGPLHASLVEVIRPHSILRNNPYCKRIFSRNLLKK</sequence>
<accession>Q9C9R6</accession>
<name>PUM7_ARATH</name>
<keyword id="KW-0150">Chloroplast</keyword>
<keyword id="KW-0963">Cytoplasm</keyword>
<keyword id="KW-0934">Plastid</keyword>
<keyword id="KW-1185">Reference proteome</keyword>
<keyword id="KW-0677">Repeat</keyword>
<keyword id="KW-0694">RNA-binding</keyword>
<keyword id="KW-0809">Transit peptide</keyword>
<keyword id="KW-0810">Translation regulation</keyword>